<keyword id="KW-1185">Reference proteome</keyword>
<sequence length="888" mass="100216">MPIFRPKHQKLILQCYPPGKGVDKKPNPSELSYLLYYASTRRVKLEKVVTFLDRKTTSDAKHNRAGNLQVTLTIISSLIEECSENLNVFASFVCSILKSVLQSKDLSLCKHAIQTYGVLCSKLDGGLFSGDKVFVDSFGSLSQNLINIGSENSKKRGPNNLEWQMISLMTCRYISNCLGYNSKFSKKFIEICIPILTETVHANNKQSNLLTILKSNVNIEDENHHLGRIASTKTNQTSRKAQQDLDNDAVKDSDLNEEALRGLKALFSTSLTSQISEATRAIVKNNYATTIDPIWGCTFLEMCTTWIPVQLRFITLSTVLSSLTSLSNKSTKKTSNYPIQLLYANYCLGLVSSDVNMIGLSISDVIQQILFLQANLLLSQSHYFQEEDVKKLSMIYSNCICNLSTHIYYFDQVPDSIREILIKVVSILENSVISGNANSSGVYRFIITLLEDISIIFDLLQTKPSNISRNHVSLEDWDLSLILLSSEIGLNPTKDQKPLFSYEQITDIQFKYLRVFGYFLNNELVTRNENMETGAINSIESFNVGGDHLQPDYNNYISDPGNFIAHFLGYVDKFFSGQSLINIDNASLLQKVLKNMILILGINFINNFVPFFFYWQLPLNPNLVDDNTRIKDTLGYTLIYHSLIKMDKIYELNYVRESEFFNSLLGDINYRKLNKLWVNGLQSKEEDAVLDNHHALGHRDENGTLRFNPTKKNLEDFVIGNAFTLSWINPHRPLILDIVNNYIPKKENNQNVLSDMSDESSIIENSSYHTSARQNGFGLGLGNANDISSIHSGLLFHQSQNVNMKNAFSNGNETSNGSIYTSDRQYNTPRVSDLKDSVLMKKKPGVAFNEHYNSDTTPGSILSKQMVTSDIDSILEGLDIDDDSEIIV</sequence>
<accession>Q6BLT4</accession>
<accession>B5RUE2</accession>
<dbReference type="EMBL" id="CR382138">
    <property type="protein sequence ID" value="CAR66320.1"/>
    <property type="molecule type" value="Genomic_DNA"/>
</dbReference>
<dbReference type="RefSeq" id="XP_002770795.1">
    <property type="nucleotide sequence ID" value="XM_002770749.1"/>
</dbReference>
<dbReference type="SMR" id="Q6BLT4"/>
<dbReference type="STRING" id="284592.Q6BLT4"/>
<dbReference type="GeneID" id="8998941"/>
<dbReference type="KEGG" id="dha:DEHA2F10890g"/>
<dbReference type="VEuPathDB" id="FungiDB:DEHA2F10890g"/>
<dbReference type="eggNOG" id="KOG1877">
    <property type="taxonomic scope" value="Eukaryota"/>
</dbReference>
<dbReference type="HOGENOM" id="CLU_333688_0_0_1"/>
<dbReference type="InParanoid" id="Q6BLT4"/>
<dbReference type="OMA" id="LQCYPAG"/>
<dbReference type="OrthoDB" id="19232at2759"/>
<dbReference type="Proteomes" id="UP000000599">
    <property type="component" value="Chromosome F"/>
</dbReference>
<dbReference type="GO" id="GO:0005886">
    <property type="term" value="C:plasma membrane"/>
    <property type="evidence" value="ECO:0007669"/>
    <property type="project" value="TreeGrafter"/>
</dbReference>
<dbReference type="GO" id="GO:0072659">
    <property type="term" value="P:protein localization to plasma membrane"/>
    <property type="evidence" value="ECO:0007669"/>
    <property type="project" value="InterPro"/>
</dbReference>
<dbReference type="InterPro" id="IPR039786">
    <property type="entry name" value="EFR3"/>
</dbReference>
<dbReference type="InterPro" id="IPR049150">
    <property type="entry name" value="EFR3_HEAT-like_rpt"/>
</dbReference>
<dbReference type="PANTHER" id="PTHR47766">
    <property type="entry name" value="PROTEIN EFR3"/>
    <property type="match status" value="1"/>
</dbReference>
<dbReference type="PANTHER" id="PTHR47766:SF1">
    <property type="entry name" value="PROTEIN EFR3"/>
    <property type="match status" value="1"/>
</dbReference>
<dbReference type="Pfam" id="PF21072">
    <property type="entry name" value="EFR3"/>
    <property type="match status" value="1"/>
</dbReference>
<reference key="1">
    <citation type="journal article" date="2004" name="Nature">
        <title>Genome evolution in yeasts.</title>
        <authorList>
            <person name="Dujon B."/>
            <person name="Sherman D."/>
            <person name="Fischer G."/>
            <person name="Durrens P."/>
            <person name="Casaregola S."/>
            <person name="Lafontaine I."/>
            <person name="de Montigny J."/>
            <person name="Marck C."/>
            <person name="Neuveglise C."/>
            <person name="Talla E."/>
            <person name="Goffard N."/>
            <person name="Frangeul L."/>
            <person name="Aigle M."/>
            <person name="Anthouard V."/>
            <person name="Babour A."/>
            <person name="Barbe V."/>
            <person name="Barnay S."/>
            <person name="Blanchin S."/>
            <person name="Beckerich J.-M."/>
            <person name="Beyne E."/>
            <person name="Bleykasten C."/>
            <person name="Boisrame A."/>
            <person name="Boyer J."/>
            <person name="Cattolico L."/>
            <person name="Confanioleri F."/>
            <person name="de Daruvar A."/>
            <person name="Despons L."/>
            <person name="Fabre E."/>
            <person name="Fairhead C."/>
            <person name="Ferry-Dumazet H."/>
            <person name="Groppi A."/>
            <person name="Hantraye F."/>
            <person name="Hennequin C."/>
            <person name="Jauniaux N."/>
            <person name="Joyet P."/>
            <person name="Kachouri R."/>
            <person name="Kerrest A."/>
            <person name="Koszul R."/>
            <person name="Lemaire M."/>
            <person name="Lesur I."/>
            <person name="Ma L."/>
            <person name="Muller H."/>
            <person name="Nicaud J.-M."/>
            <person name="Nikolski M."/>
            <person name="Oztas S."/>
            <person name="Ozier-Kalogeropoulos O."/>
            <person name="Pellenz S."/>
            <person name="Potier S."/>
            <person name="Richard G.-F."/>
            <person name="Straub M.-L."/>
            <person name="Suleau A."/>
            <person name="Swennen D."/>
            <person name="Tekaia F."/>
            <person name="Wesolowski-Louvel M."/>
            <person name="Westhof E."/>
            <person name="Wirth B."/>
            <person name="Zeniou-Meyer M."/>
            <person name="Zivanovic Y."/>
            <person name="Bolotin-Fukuhara M."/>
            <person name="Thierry A."/>
            <person name="Bouchier C."/>
            <person name="Caudron B."/>
            <person name="Scarpelli C."/>
            <person name="Gaillardin C."/>
            <person name="Weissenbach J."/>
            <person name="Wincker P."/>
            <person name="Souciet J.-L."/>
        </authorList>
    </citation>
    <scope>NUCLEOTIDE SEQUENCE [LARGE SCALE GENOMIC DNA]</scope>
    <source>
        <strain>ATCC 36239 / CBS 767 / BCRC 21394 / JCM 1990 / NBRC 0083 / IGC 2968</strain>
    </source>
</reference>
<proteinExistence type="inferred from homology"/>
<gene>
    <name type="primary">EFR3</name>
    <name type="ordered locus">DEHA2F10890g</name>
</gene>
<comment type="similarity">
    <text evidence="1">Belongs to the EFR3 family.</text>
</comment>
<name>EFR3_DEBHA</name>
<protein>
    <recommendedName>
        <fullName>Protein EFR3</fullName>
    </recommendedName>
</protein>
<evidence type="ECO:0000305" key="1"/>
<feature type="chain" id="PRO_0000270777" description="Protein EFR3">
    <location>
        <begin position="1"/>
        <end position="888"/>
    </location>
</feature>
<organism>
    <name type="scientific">Debaryomyces hansenii (strain ATCC 36239 / CBS 767 / BCRC 21394 / JCM 1990 / NBRC 0083 / IGC 2968)</name>
    <name type="common">Yeast</name>
    <name type="synonym">Torulaspora hansenii</name>
    <dbReference type="NCBI Taxonomy" id="284592"/>
    <lineage>
        <taxon>Eukaryota</taxon>
        <taxon>Fungi</taxon>
        <taxon>Dikarya</taxon>
        <taxon>Ascomycota</taxon>
        <taxon>Saccharomycotina</taxon>
        <taxon>Pichiomycetes</taxon>
        <taxon>Debaryomycetaceae</taxon>
        <taxon>Debaryomyces</taxon>
    </lineage>
</organism>